<evidence type="ECO:0000255" key="1">
    <source>
        <dbReference type="PROSITE-ProRule" id="PRU01182"/>
    </source>
</evidence>
<evidence type="ECO:0000305" key="2"/>
<gene>
    <name type="ordered locus">BT9727_4187</name>
</gene>
<organism>
    <name type="scientific">Bacillus thuringiensis subsp. konkukian (strain 97-27)</name>
    <dbReference type="NCBI Taxonomy" id="281309"/>
    <lineage>
        <taxon>Bacteria</taxon>
        <taxon>Bacillati</taxon>
        <taxon>Bacillota</taxon>
        <taxon>Bacilli</taxon>
        <taxon>Bacillales</taxon>
        <taxon>Bacillaceae</taxon>
        <taxon>Bacillus</taxon>
        <taxon>Bacillus cereus group</taxon>
    </lineage>
</organism>
<reference key="1">
    <citation type="journal article" date="2006" name="J. Bacteriol.">
        <title>Pathogenomic sequence analysis of Bacillus cereus and Bacillus thuringiensis isolates closely related to Bacillus anthracis.</title>
        <authorList>
            <person name="Han C.S."/>
            <person name="Xie G."/>
            <person name="Challacombe J.F."/>
            <person name="Altherr M.R."/>
            <person name="Bhotika S.S."/>
            <person name="Bruce D."/>
            <person name="Campbell C.S."/>
            <person name="Campbell M.L."/>
            <person name="Chen J."/>
            <person name="Chertkov O."/>
            <person name="Cleland C."/>
            <person name="Dimitrijevic M."/>
            <person name="Doggett N.A."/>
            <person name="Fawcett J.J."/>
            <person name="Glavina T."/>
            <person name="Goodwin L.A."/>
            <person name="Hill K.K."/>
            <person name="Hitchcock P."/>
            <person name="Jackson P.J."/>
            <person name="Keim P."/>
            <person name="Kewalramani A.R."/>
            <person name="Longmire J."/>
            <person name="Lucas S."/>
            <person name="Malfatti S."/>
            <person name="McMurry K."/>
            <person name="Meincke L.J."/>
            <person name="Misra M."/>
            <person name="Moseman B.L."/>
            <person name="Mundt M."/>
            <person name="Munk A.C."/>
            <person name="Okinaka R.T."/>
            <person name="Parson-Quintana B."/>
            <person name="Reilly L.P."/>
            <person name="Richardson P."/>
            <person name="Robinson D.L."/>
            <person name="Rubin E."/>
            <person name="Saunders E."/>
            <person name="Tapia R."/>
            <person name="Tesmer J.G."/>
            <person name="Thayer N."/>
            <person name="Thompson L.S."/>
            <person name="Tice H."/>
            <person name="Ticknor L.O."/>
            <person name="Wills P.L."/>
            <person name="Brettin T.S."/>
            <person name="Gilna P."/>
        </authorList>
    </citation>
    <scope>NUCLEOTIDE SEQUENCE [LARGE SCALE GENOMIC DNA]</scope>
    <source>
        <strain>97-27</strain>
    </source>
</reference>
<proteinExistence type="inferred from homology"/>
<sequence length="225" mass="25632">MNGIRDVVKEEQPRERLLLEGAGSLSNRELLAVLLRTGSKEESVLKLSDKILHHFDGLRMLKDATLEELVSIHGVGVAKATQLIAAFELGRRMVRLEYQNRYSIRSPEDCATYMMEEMRFLQQEHFVCLYLNTKNQVIHRQTIFIGSLNSSIVHPREVFKEAFRRAAASIICLHNHPSGDPAPSREDIEVTKRLVECGRIIGIEVLDHIIIGDHKFVSLKEKGHI</sequence>
<dbReference type="EMBL" id="AE017355">
    <property type="protein sequence ID" value="AAT60841.1"/>
    <property type="molecule type" value="Genomic_DNA"/>
</dbReference>
<dbReference type="RefSeq" id="YP_038504.1">
    <property type="nucleotide sequence ID" value="NC_005957.1"/>
</dbReference>
<dbReference type="SMR" id="Q6HD72"/>
<dbReference type="KEGG" id="btk:BT9727_4187"/>
<dbReference type="PATRIC" id="fig|281309.8.peg.4465"/>
<dbReference type="HOGENOM" id="CLU_073529_0_2_9"/>
<dbReference type="Proteomes" id="UP000001301">
    <property type="component" value="Chromosome"/>
</dbReference>
<dbReference type="GO" id="GO:0046872">
    <property type="term" value="F:metal ion binding"/>
    <property type="evidence" value="ECO:0007669"/>
    <property type="project" value="UniProtKB-KW"/>
</dbReference>
<dbReference type="GO" id="GO:0008237">
    <property type="term" value="F:metallopeptidase activity"/>
    <property type="evidence" value="ECO:0007669"/>
    <property type="project" value="UniProtKB-KW"/>
</dbReference>
<dbReference type="GO" id="GO:0006508">
    <property type="term" value="P:proteolysis"/>
    <property type="evidence" value="ECO:0007669"/>
    <property type="project" value="UniProtKB-KW"/>
</dbReference>
<dbReference type="CDD" id="cd08071">
    <property type="entry name" value="MPN_DUF2466"/>
    <property type="match status" value="1"/>
</dbReference>
<dbReference type="Gene3D" id="3.40.140.10">
    <property type="entry name" value="Cytidine Deaminase, domain 2"/>
    <property type="match status" value="1"/>
</dbReference>
<dbReference type="InterPro" id="IPR037518">
    <property type="entry name" value="MPN"/>
</dbReference>
<dbReference type="InterPro" id="IPR025657">
    <property type="entry name" value="RadC_JAB"/>
</dbReference>
<dbReference type="InterPro" id="IPR010994">
    <property type="entry name" value="RuvA_2-like"/>
</dbReference>
<dbReference type="InterPro" id="IPR001405">
    <property type="entry name" value="UPF0758"/>
</dbReference>
<dbReference type="InterPro" id="IPR020891">
    <property type="entry name" value="UPF0758_CS"/>
</dbReference>
<dbReference type="InterPro" id="IPR046778">
    <property type="entry name" value="UPF0758_N"/>
</dbReference>
<dbReference type="NCBIfam" id="NF000642">
    <property type="entry name" value="PRK00024.1"/>
    <property type="match status" value="1"/>
</dbReference>
<dbReference type="NCBIfam" id="TIGR00608">
    <property type="entry name" value="radc"/>
    <property type="match status" value="1"/>
</dbReference>
<dbReference type="PANTHER" id="PTHR30471">
    <property type="entry name" value="DNA REPAIR PROTEIN RADC"/>
    <property type="match status" value="1"/>
</dbReference>
<dbReference type="PANTHER" id="PTHR30471:SF3">
    <property type="entry name" value="UPF0758 PROTEIN YEES-RELATED"/>
    <property type="match status" value="1"/>
</dbReference>
<dbReference type="Pfam" id="PF04002">
    <property type="entry name" value="RadC"/>
    <property type="match status" value="1"/>
</dbReference>
<dbReference type="Pfam" id="PF20582">
    <property type="entry name" value="UPF0758_N"/>
    <property type="match status" value="1"/>
</dbReference>
<dbReference type="SUPFAM" id="SSF102712">
    <property type="entry name" value="JAB1/MPN domain"/>
    <property type="match status" value="1"/>
</dbReference>
<dbReference type="SUPFAM" id="SSF47781">
    <property type="entry name" value="RuvA domain 2-like"/>
    <property type="match status" value="1"/>
</dbReference>
<dbReference type="PROSITE" id="PS50249">
    <property type="entry name" value="MPN"/>
    <property type="match status" value="1"/>
</dbReference>
<dbReference type="PROSITE" id="PS01302">
    <property type="entry name" value="UPF0758"/>
    <property type="match status" value="1"/>
</dbReference>
<feature type="chain" id="PRO_0000190680" description="UPF0758 protein BT9727_4187">
    <location>
        <begin position="1"/>
        <end position="225"/>
    </location>
</feature>
<feature type="domain" description="MPN" evidence="1">
    <location>
        <begin position="103"/>
        <end position="225"/>
    </location>
</feature>
<feature type="short sequence motif" description="JAMM motif" evidence="1">
    <location>
        <begin position="174"/>
        <end position="187"/>
    </location>
</feature>
<feature type="binding site" evidence="1">
    <location>
        <position position="174"/>
    </location>
    <ligand>
        <name>Zn(2+)</name>
        <dbReference type="ChEBI" id="CHEBI:29105"/>
        <note>catalytic</note>
    </ligand>
</feature>
<feature type="binding site" evidence="1">
    <location>
        <position position="176"/>
    </location>
    <ligand>
        <name>Zn(2+)</name>
        <dbReference type="ChEBI" id="CHEBI:29105"/>
        <note>catalytic</note>
    </ligand>
</feature>
<feature type="binding site" evidence="1">
    <location>
        <position position="187"/>
    </location>
    <ligand>
        <name>Zn(2+)</name>
        <dbReference type="ChEBI" id="CHEBI:29105"/>
        <note>catalytic</note>
    </ligand>
</feature>
<comment type="similarity">
    <text evidence="2">Belongs to the UPF0758 family.</text>
</comment>
<name>Y4187_BACHK</name>
<accession>Q6HD72</accession>
<keyword id="KW-0378">Hydrolase</keyword>
<keyword id="KW-0479">Metal-binding</keyword>
<keyword id="KW-0482">Metalloprotease</keyword>
<keyword id="KW-0645">Protease</keyword>
<keyword id="KW-0862">Zinc</keyword>
<protein>
    <recommendedName>
        <fullName>UPF0758 protein BT9727_4187</fullName>
    </recommendedName>
</protein>